<protein>
    <recommendedName>
        <fullName>ATP-dependent RNA helicase DED1</fullName>
        <ecNumber>3.6.4.13</ecNumber>
    </recommendedName>
</protein>
<dbReference type="EC" id="3.6.4.13"/>
<dbReference type="EMBL" id="AE016817">
    <property type="protein sequence ID" value="AAS51647.2"/>
    <property type="molecule type" value="Genomic_DNA"/>
</dbReference>
<dbReference type="RefSeq" id="NP_983823.2">
    <property type="nucleotide sequence ID" value="NM_209176.2"/>
</dbReference>
<dbReference type="SMR" id="Q75B50"/>
<dbReference type="FunCoup" id="Q75B50">
    <property type="interactions" value="1451"/>
</dbReference>
<dbReference type="STRING" id="284811.Q75B50"/>
<dbReference type="EnsemblFungi" id="AAS51647">
    <property type="protein sequence ID" value="AAS51647"/>
    <property type="gene ID" value="AGOS_ADL273C"/>
</dbReference>
<dbReference type="GeneID" id="4619958"/>
<dbReference type="KEGG" id="ago:AGOS_ADL273C"/>
<dbReference type="eggNOG" id="KOG0335">
    <property type="taxonomic scope" value="Eukaryota"/>
</dbReference>
<dbReference type="HOGENOM" id="CLU_003041_16_3_1"/>
<dbReference type="InParanoid" id="Q75B50"/>
<dbReference type="OMA" id="CYRSWVR"/>
<dbReference type="OrthoDB" id="196131at2759"/>
<dbReference type="Proteomes" id="UP000000591">
    <property type="component" value="Chromosome IV"/>
</dbReference>
<dbReference type="GO" id="GO:0010494">
    <property type="term" value="C:cytoplasmic stress granule"/>
    <property type="evidence" value="ECO:0007669"/>
    <property type="project" value="EnsemblFungi"/>
</dbReference>
<dbReference type="GO" id="GO:0005634">
    <property type="term" value="C:nucleus"/>
    <property type="evidence" value="ECO:0000318"/>
    <property type="project" value="GO_Central"/>
</dbReference>
<dbReference type="GO" id="GO:0005681">
    <property type="term" value="C:spliceosomal complex"/>
    <property type="evidence" value="ECO:0007669"/>
    <property type="project" value="EnsemblFungi"/>
</dbReference>
<dbReference type="GO" id="GO:0005524">
    <property type="term" value="F:ATP binding"/>
    <property type="evidence" value="ECO:0007669"/>
    <property type="project" value="UniProtKB-KW"/>
</dbReference>
<dbReference type="GO" id="GO:0016887">
    <property type="term" value="F:ATP hydrolysis activity"/>
    <property type="evidence" value="ECO:0007669"/>
    <property type="project" value="RHEA"/>
</dbReference>
<dbReference type="GO" id="GO:0031370">
    <property type="term" value="F:eukaryotic initiation factor 4G binding"/>
    <property type="evidence" value="ECO:0007669"/>
    <property type="project" value="EnsemblFungi"/>
</dbReference>
<dbReference type="GO" id="GO:0051880">
    <property type="term" value="F:G-quadruplex DNA binding"/>
    <property type="evidence" value="ECO:0007669"/>
    <property type="project" value="EnsemblFungi"/>
</dbReference>
<dbReference type="GO" id="GO:0002151">
    <property type="term" value="F:G-quadruplex RNA binding"/>
    <property type="evidence" value="ECO:0007669"/>
    <property type="project" value="EnsemblFungi"/>
</dbReference>
<dbReference type="GO" id="GO:0003729">
    <property type="term" value="F:mRNA binding"/>
    <property type="evidence" value="ECO:0000318"/>
    <property type="project" value="GO_Central"/>
</dbReference>
<dbReference type="GO" id="GO:0003724">
    <property type="term" value="F:RNA helicase activity"/>
    <property type="evidence" value="ECO:0000318"/>
    <property type="project" value="GO_Central"/>
</dbReference>
<dbReference type="GO" id="GO:0033592">
    <property type="term" value="F:RNA strand annealing activity"/>
    <property type="evidence" value="ECO:0007669"/>
    <property type="project" value="EnsemblFungi"/>
</dbReference>
<dbReference type="GO" id="GO:0003743">
    <property type="term" value="F:translation initiation factor activity"/>
    <property type="evidence" value="ECO:0007669"/>
    <property type="project" value="UniProtKB-KW"/>
</dbReference>
<dbReference type="GO" id="GO:0002183">
    <property type="term" value="P:cytoplasmic translational initiation"/>
    <property type="evidence" value="ECO:0007669"/>
    <property type="project" value="EnsemblFungi"/>
</dbReference>
<dbReference type="GO" id="GO:1990625">
    <property type="term" value="P:negative regulation of cytoplasmic translational initiation in response to stress"/>
    <property type="evidence" value="ECO:0007669"/>
    <property type="project" value="EnsemblFungi"/>
</dbReference>
<dbReference type="GO" id="GO:1901195">
    <property type="term" value="P:positive regulation of formation of translation preinitiation complex"/>
    <property type="evidence" value="ECO:0007669"/>
    <property type="project" value="EnsemblFungi"/>
</dbReference>
<dbReference type="GO" id="GO:0031047">
    <property type="term" value="P:regulatory ncRNA-mediated gene silencing"/>
    <property type="evidence" value="ECO:0007669"/>
    <property type="project" value="EnsemblFungi"/>
</dbReference>
<dbReference type="GO" id="GO:0000390">
    <property type="term" value="P:spliceosomal complex disassembly"/>
    <property type="evidence" value="ECO:0007669"/>
    <property type="project" value="EnsemblFungi"/>
</dbReference>
<dbReference type="CDD" id="cd17967">
    <property type="entry name" value="DEADc_DDX3_DDX4"/>
    <property type="match status" value="1"/>
</dbReference>
<dbReference type="CDD" id="cd18787">
    <property type="entry name" value="SF2_C_DEAD"/>
    <property type="match status" value="1"/>
</dbReference>
<dbReference type="FunFam" id="3.40.50.300:FF:000160">
    <property type="entry name" value="ATP-dependent RNA helicase DDX3X"/>
    <property type="match status" value="1"/>
</dbReference>
<dbReference type="FunFam" id="3.40.50.300:FF:000008">
    <property type="entry name" value="ATP-dependent RNA helicase RhlB"/>
    <property type="match status" value="1"/>
</dbReference>
<dbReference type="Gene3D" id="3.40.50.300">
    <property type="entry name" value="P-loop containing nucleotide triphosphate hydrolases"/>
    <property type="match status" value="2"/>
</dbReference>
<dbReference type="InterPro" id="IPR011545">
    <property type="entry name" value="DEAD/DEAH_box_helicase_dom"/>
</dbReference>
<dbReference type="InterPro" id="IPR044763">
    <property type="entry name" value="Ded1/Dbp1_DEADc"/>
</dbReference>
<dbReference type="InterPro" id="IPR014001">
    <property type="entry name" value="Helicase_ATP-bd"/>
</dbReference>
<dbReference type="InterPro" id="IPR001650">
    <property type="entry name" value="Helicase_C-like"/>
</dbReference>
<dbReference type="InterPro" id="IPR027417">
    <property type="entry name" value="P-loop_NTPase"/>
</dbReference>
<dbReference type="InterPro" id="IPR000629">
    <property type="entry name" value="RNA-helicase_DEAD-box_CS"/>
</dbReference>
<dbReference type="InterPro" id="IPR014014">
    <property type="entry name" value="RNA_helicase_DEAD_Q_motif"/>
</dbReference>
<dbReference type="PANTHER" id="PTHR47958">
    <property type="entry name" value="ATP-DEPENDENT RNA HELICASE DBP3"/>
    <property type="match status" value="1"/>
</dbReference>
<dbReference type="Pfam" id="PF00270">
    <property type="entry name" value="DEAD"/>
    <property type="match status" value="1"/>
</dbReference>
<dbReference type="Pfam" id="PF00271">
    <property type="entry name" value="Helicase_C"/>
    <property type="match status" value="1"/>
</dbReference>
<dbReference type="SMART" id="SM00487">
    <property type="entry name" value="DEXDc"/>
    <property type="match status" value="1"/>
</dbReference>
<dbReference type="SMART" id="SM00490">
    <property type="entry name" value="HELICc"/>
    <property type="match status" value="1"/>
</dbReference>
<dbReference type="SUPFAM" id="SSF52540">
    <property type="entry name" value="P-loop containing nucleoside triphosphate hydrolases"/>
    <property type="match status" value="1"/>
</dbReference>
<dbReference type="PROSITE" id="PS00039">
    <property type="entry name" value="DEAD_ATP_HELICASE"/>
    <property type="match status" value="1"/>
</dbReference>
<dbReference type="PROSITE" id="PS51192">
    <property type="entry name" value="HELICASE_ATP_BIND_1"/>
    <property type="match status" value="1"/>
</dbReference>
<dbReference type="PROSITE" id="PS51194">
    <property type="entry name" value="HELICASE_CTER"/>
    <property type="match status" value="1"/>
</dbReference>
<dbReference type="PROSITE" id="PS51195">
    <property type="entry name" value="Q_MOTIF"/>
    <property type="match status" value="1"/>
</dbReference>
<gene>
    <name type="primary">DED1</name>
    <name type="ordered locus">ADL273C</name>
</gene>
<comment type="function">
    <text evidence="1">ATP-binding RNA helicase involved in translation initiation. Remodels RNA in response to ADP and ATP concentrations by facilitating disruption, but also formation of RNA duplexes (By similarity).</text>
</comment>
<comment type="catalytic activity">
    <reaction>
        <text>ATP + H2O = ADP + phosphate + H(+)</text>
        <dbReference type="Rhea" id="RHEA:13065"/>
        <dbReference type="ChEBI" id="CHEBI:15377"/>
        <dbReference type="ChEBI" id="CHEBI:15378"/>
        <dbReference type="ChEBI" id="CHEBI:30616"/>
        <dbReference type="ChEBI" id="CHEBI:43474"/>
        <dbReference type="ChEBI" id="CHEBI:456216"/>
        <dbReference type="EC" id="3.6.4.13"/>
    </reaction>
</comment>
<comment type="subcellular location">
    <subcellularLocation>
        <location evidence="1">Cytoplasm</location>
    </subcellularLocation>
</comment>
<comment type="domain">
    <text>The Q motif is unique to and characteristic of the DEAD box family of RNA helicases and controls ATP binding and hydrolysis.</text>
</comment>
<comment type="similarity">
    <text evidence="5">Belongs to the DEAD box helicase family. DDX3/DED1 subfamily.</text>
</comment>
<feature type="chain" id="PRO_0000227953" description="ATP-dependent RNA helicase DED1">
    <location>
        <begin position="1"/>
        <end position="623"/>
    </location>
</feature>
<feature type="domain" description="Helicase ATP-binding" evidence="2">
    <location>
        <begin position="177"/>
        <end position="365"/>
    </location>
</feature>
<feature type="domain" description="Helicase C-terminal" evidence="3">
    <location>
        <begin position="392"/>
        <end position="536"/>
    </location>
</feature>
<feature type="region of interest" description="Disordered" evidence="4">
    <location>
        <begin position="1"/>
        <end position="93"/>
    </location>
</feature>
<feature type="region of interest" description="Disordered" evidence="4">
    <location>
        <begin position="541"/>
        <end position="623"/>
    </location>
</feature>
<feature type="short sequence motif" description="Q motif">
    <location>
        <begin position="146"/>
        <end position="174"/>
    </location>
</feature>
<feature type="short sequence motif" description="DEAD box">
    <location>
        <begin position="309"/>
        <end position="312"/>
    </location>
</feature>
<feature type="compositionally biased region" description="Gly residues" evidence="4">
    <location>
        <begin position="60"/>
        <end position="78"/>
    </location>
</feature>
<feature type="compositionally biased region" description="Gly residues" evidence="4">
    <location>
        <begin position="541"/>
        <end position="557"/>
    </location>
</feature>
<feature type="compositionally biased region" description="Polar residues" evidence="4">
    <location>
        <begin position="575"/>
        <end position="591"/>
    </location>
</feature>
<feature type="compositionally biased region" description="Gly residues" evidence="4">
    <location>
        <begin position="594"/>
        <end position="604"/>
    </location>
</feature>
<feature type="compositionally biased region" description="Polar residues" evidence="4">
    <location>
        <begin position="611"/>
        <end position="623"/>
    </location>
</feature>
<feature type="binding site" evidence="2">
    <location>
        <begin position="190"/>
        <end position="197"/>
    </location>
    <ligand>
        <name>ATP</name>
        <dbReference type="ChEBI" id="CHEBI:30616"/>
    </ligand>
</feature>
<reference key="1">
    <citation type="journal article" date="2004" name="Science">
        <title>The Ashbya gossypii genome as a tool for mapping the ancient Saccharomyces cerevisiae genome.</title>
        <authorList>
            <person name="Dietrich F.S."/>
            <person name="Voegeli S."/>
            <person name="Brachat S."/>
            <person name="Lerch A."/>
            <person name="Gates K."/>
            <person name="Steiner S."/>
            <person name="Mohr C."/>
            <person name="Poehlmann R."/>
            <person name="Luedi P."/>
            <person name="Choi S."/>
            <person name="Wing R.A."/>
            <person name="Flavier A."/>
            <person name="Gaffney T.D."/>
            <person name="Philippsen P."/>
        </authorList>
    </citation>
    <scope>NUCLEOTIDE SEQUENCE [LARGE SCALE GENOMIC DNA]</scope>
    <source>
        <strain>ATCC 10895 / CBS 109.51 / FGSC 9923 / NRRL Y-1056</strain>
    </source>
</reference>
<reference key="2">
    <citation type="journal article" date="2013" name="G3 (Bethesda)">
        <title>Genomes of Ashbya fungi isolated from insects reveal four mating-type loci, numerous translocations, lack of transposons, and distinct gene duplications.</title>
        <authorList>
            <person name="Dietrich F.S."/>
            <person name="Voegeli S."/>
            <person name="Kuo S."/>
            <person name="Philippsen P."/>
        </authorList>
    </citation>
    <scope>GENOME REANNOTATION</scope>
    <scope>SEQUENCE REVISION TO 590 AND 598</scope>
    <source>
        <strain>ATCC 10895 / CBS 109.51 / FGSC 9923 / NRRL Y-1056</strain>
    </source>
</reference>
<name>DED1_EREGS</name>
<proteinExistence type="inferred from homology"/>
<accession>Q75B50</accession>
<evidence type="ECO:0000250" key="1"/>
<evidence type="ECO:0000255" key="2">
    <source>
        <dbReference type="PROSITE-ProRule" id="PRU00541"/>
    </source>
</evidence>
<evidence type="ECO:0000255" key="3">
    <source>
        <dbReference type="PROSITE-ProRule" id="PRU00542"/>
    </source>
</evidence>
<evidence type="ECO:0000256" key="4">
    <source>
        <dbReference type="SAM" id="MobiDB-lite"/>
    </source>
</evidence>
<evidence type="ECO:0000305" key="5"/>
<keyword id="KW-0067">ATP-binding</keyword>
<keyword id="KW-0963">Cytoplasm</keyword>
<keyword id="KW-0347">Helicase</keyword>
<keyword id="KW-0378">Hydrolase</keyword>
<keyword id="KW-0396">Initiation factor</keyword>
<keyword id="KW-0547">Nucleotide-binding</keyword>
<keyword id="KW-0648">Protein biosynthesis</keyword>
<keyword id="KW-1185">Reference proteome</keyword>
<keyword id="KW-0694">RNA-binding</keyword>
<sequence>MSELVNKMENLSVGDSAQKKSAYVPPHVKRRMKEGGSEPSSRNTENFGNGGRFGGSEHNGFGGGRGSWFGGNARGGGPRSSDRGGSSRFGKWVDGKHVPMKRNEKLEVQLFGTPEDPNFQSSGINFDNYDDIPVDASGEDVPDPITEFTSPPLDELLLENIKLARFTKPTPVQKYSVPIVAKGRDLMACAQTGSGKTGGFLFPVLSQSFSNGPASTPDESGYYMRKAYPTAVVLAPTRELATQIFDEAKKFTYRSWVKPCVVYGGADIRQQIRELERGCDLIVATPGRLNDLLERGKISLCSVKYLVLDEADRMLDMGFEPQIRHIVEGCDMPTVENRQTLMFSATFPTDIQHLAADFLKDYIFLSVGRVGSTSENITQKVLHVEDIDKRSVLLDLLAASDGGLTLVFVETKRMADALTDFLIMQNLSATAIHGDRTQAERERALAFFRTGRANVLVATAVAARGLDIPNVTHVINYDLPSDIDDYVHRIGRTGRAGNTGLATAFFNRGNKNVVKELVDILEEANQEVPSFLSQIAKEMSYGGGGGKSSRGGRGGYSRGNSTRDFRRHGGGGGSEWSSANRASSGWGNANRTGSGWGGSSGFGGSTESWSNASKTVGSNNSWW</sequence>
<organism>
    <name type="scientific">Eremothecium gossypii (strain ATCC 10895 / CBS 109.51 / FGSC 9923 / NRRL Y-1056)</name>
    <name type="common">Yeast</name>
    <name type="synonym">Ashbya gossypii</name>
    <dbReference type="NCBI Taxonomy" id="284811"/>
    <lineage>
        <taxon>Eukaryota</taxon>
        <taxon>Fungi</taxon>
        <taxon>Dikarya</taxon>
        <taxon>Ascomycota</taxon>
        <taxon>Saccharomycotina</taxon>
        <taxon>Saccharomycetes</taxon>
        <taxon>Saccharomycetales</taxon>
        <taxon>Saccharomycetaceae</taxon>
        <taxon>Eremothecium</taxon>
    </lineage>
</organism>